<comment type="function">
    <text evidence="1 2 4 5">Acyltransferase required to remodel newly synthesized phospholipid cardiolipin (1',3'-bis-[1,2-diacyl-sn-glycero-3-phospho]-glycerol or CL), a key component of the mitochondrial inner membrane, with tissue specific acyl chains necessary for adequate mitochondrial function (By similarity). Its role in cellular physiology is to improve mitochondrial performance (By similarity). CL is critical for the coassembly of lipids and proteins in mitochondrial membranes, for instance, remodeling of the acyl groups of CL in the mitochondrial inner membrane affects the assembly and stability of respiratory chain complex IV and its supercomplex forms (By similarity). Catalyzes the transacylation between phospholipids and lysophospholipids, with the highest rate being between phosphatidylcholine (1,2-diacyl-sn-glycero-3-phosphocholine or PC) and CL. Catalyzes both 1-acyl-sn-glycero-3-phosphocholine (lysophosphatidylcholine or LPC) reacylation and PC-CL transacylation, that means, it exchanges acyl groups between CL and PC by a combination of forward and reverse transacylations. Also catalyzes transacylations between other phospholipids such as phosphatidylethanolamine (1,2-diacyl-sn-glycero-3-phosphoethanolamine or PE) and CL, between PC and PE, and between PC and phosphatidate (1,2-diacyl-sn-glycero-3-phosphate or PA), although at lower rate. Not regiospecific, it transfers acyl groups into any of the sn-1 and sn-2 positions of the monolysocardiolipin (MLCL), which is an important prerequisite for uniformity and symmetry in CL acyl distribution. Cannot transacylate dilysocardiolipin (DLCL), thus, the role of MLCL is limited to that of an acyl acceptor. CoA-independent, it can reshuffle molecular species within a single phospholipid class. Redistributes fatty acids between MLCL, CL, and other lipids, which prolongs the half-life of CL. Its action is completely reversible, which allows for cyclic changes, such as fission and fusion or bending and flattening of the membrane. Hence, by contributing to the flexibility of the lipid composition, it plays an important role in the dynamics of mitochondria membranes. Essential for the final stage of spermatogenesis, spermatid individualization (By similarity). Required for the initiation of mitophagy (By similarity). Required to ensure progression of spermatocytes through meiosis (By similarity).</text>
</comment>
<comment type="catalytic activity">
    <reaction evidence="2">
        <text>a 1-acyl-sn-glycero-3-phosphate + a 1,2-diacyl-sn-glycero-3-phospho-(1'-sn-glycerol) = 1-acyl-sn-glycero-3-phospho-(1'-sn-glycerol) + a 1,2-diacyl-sn-glycero-3-phosphate</text>
        <dbReference type="Rhea" id="RHEA:67748"/>
        <dbReference type="ChEBI" id="CHEBI:57970"/>
        <dbReference type="ChEBI" id="CHEBI:58608"/>
        <dbReference type="ChEBI" id="CHEBI:64716"/>
        <dbReference type="ChEBI" id="CHEBI:64840"/>
    </reaction>
    <physiologicalReaction direction="left-to-right" evidence="2">
        <dbReference type="Rhea" id="RHEA:67749"/>
    </physiologicalReaction>
    <physiologicalReaction direction="right-to-left" evidence="2">
        <dbReference type="Rhea" id="RHEA:67750"/>
    </physiologicalReaction>
</comment>
<comment type="catalytic activity">
    <reaction evidence="2">
        <text>1-hexadecanoyl-2-(9Z,12Z-octadecadienoyl)-sn-glycero-3-phospho-(1'-sn-glycerol) + 1-(9Z-octadecenoyl)-sn-glycero-3-phosphate = 1-(9Z)-octadecenoyl-2-(9Z,12Z)-octadecadienoyl-sn-glycero-3-phosphate + 1-hexadecanoyl-sn-glycero-3-phospho-(1'-sn-glycerol)</text>
        <dbReference type="Rhea" id="RHEA:67752"/>
        <dbReference type="ChEBI" id="CHEBI:72840"/>
        <dbReference type="ChEBI" id="CHEBI:74544"/>
        <dbReference type="ChEBI" id="CHEBI:74563"/>
        <dbReference type="ChEBI" id="CHEBI:75158"/>
    </reaction>
    <physiologicalReaction direction="left-to-right" evidence="2">
        <dbReference type="Rhea" id="RHEA:67753"/>
    </physiologicalReaction>
    <physiologicalReaction direction="right-to-left" evidence="2">
        <dbReference type="Rhea" id="RHEA:67754"/>
    </physiologicalReaction>
</comment>
<comment type="catalytic activity">
    <reaction evidence="2">
        <text>1'-[1,2-diacyl-sn-glycero-3-phospho],3'-[1-acyl-sn-glycero-3-phospho]-glycerol + a 1,2-diacyl-sn-glycero-3-phosphocholine = a cardiolipin + a 1-acyl-sn-glycero-3-phosphocholine</text>
        <dbReference type="Rhea" id="RHEA:33731"/>
        <dbReference type="ChEBI" id="CHEBI:57643"/>
        <dbReference type="ChEBI" id="CHEBI:58168"/>
        <dbReference type="ChEBI" id="CHEBI:62237"/>
        <dbReference type="ChEBI" id="CHEBI:64743"/>
    </reaction>
    <physiologicalReaction direction="left-to-right" evidence="2">
        <dbReference type="Rhea" id="RHEA:33732"/>
    </physiologicalReaction>
    <physiologicalReaction direction="right-to-left" evidence="2">
        <dbReference type="Rhea" id="RHEA:33733"/>
    </physiologicalReaction>
</comment>
<comment type="catalytic activity">
    <reaction evidence="2">
        <text>1-hexadecanoyl-2-(9Z,12Z-octadecadienoyl)-sn-glycero-3-phosphocholine + 1-hexadecanoyl-sn-glycero-3-phosphocholine = 2-(9Z,12Z-octadecadienoyl)-sn-glycero-3-phosphocholine + 1,2-dihexadecanoyl-sn-glycero-3-phosphocholine</text>
        <dbReference type="Rhea" id="RHEA:68988"/>
        <dbReference type="ChEBI" id="CHEBI:72998"/>
        <dbReference type="ChEBI" id="CHEBI:72999"/>
        <dbReference type="ChEBI" id="CHEBI:73002"/>
        <dbReference type="ChEBI" id="CHEBI:76084"/>
    </reaction>
    <physiologicalReaction direction="left-to-right" evidence="2">
        <dbReference type="Rhea" id="RHEA:68989"/>
    </physiologicalReaction>
    <physiologicalReaction direction="right-to-left" evidence="2">
        <dbReference type="Rhea" id="RHEA:68990"/>
    </physiologicalReaction>
</comment>
<comment type="catalytic activity">
    <reaction evidence="2">
        <text>1,2-di-(9Z-octadecenoyl)-sn-glycero-3-phosphocholine + 1-hexadecanoyl-sn-glycero-3-phosphocholine = 1-hexadecanoyl-2-(9Z-octadecenoyl)-sn-glycero-3-phosphocholine + 1-(9Z-octadecenoyl)-sn-glycero-3-phosphocholine</text>
        <dbReference type="Rhea" id="RHEA:43816"/>
        <dbReference type="ChEBI" id="CHEBI:28610"/>
        <dbReference type="ChEBI" id="CHEBI:72998"/>
        <dbReference type="ChEBI" id="CHEBI:73001"/>
        <dbReference type="ChEBI" id="CHEBI:74669"/>
    </reaction>
    <physiologicalReaction direction="left-to-right" evidence="2">
        <dbReference type="Rhea" id="RHEA:43817"/>
    </physiologicalReaction>
    <physiologicalReaction direction="right-to-left" evidence="2">
        <dbReference type="Rhea" id="RHEA:43818"/>
    </physiologicalReaction>
</comment>
<comment type="pathway">
    <text evidence="1">Phospholipid metabolism.</text>
</comment>
<comment type="subunit">
    <text evidence="2">Associates with multiple protein complexes.</text>
</comment>
<comment type="subcellular location">
    <subcellularLocation>
        <location evidence="2">Mitochondrion outer membrane</location>
        <topology evidence="2">Peripheral membrane protein</topology>
        <orientation evidence="2">Intermembrane side</orientation>
    </subcellularLocation>
    <subcellularLocation>
        <location evidence="2">Mitochondrion inner membrane</location>
        <topology evidence="2">Peripheral membrane protein</topology>
        <orientation evidence="2">Intermembrane side</orientation>
    </subcellularLocation>
</comment>
<comment type="alternative products">
    <event type="alternative splicing"/>
    <isoform>
        <id>Q6IV82-2</id>
        <name>2</name>
        <sequence type="displayed"/>
    </isoform>
    <isoform>
        <id>Q6IV82-1</id>
        <name>1</name>
        <sequence type="described" ref="VSP_061373"/>
    </isoform>
</comment>
<comment type="domain">
    <text evidence="3">The HXXXXD motif is essential for acyltransferase activity.</text>
</comment>
<comment type="miscellaneous">
    <text evidence="2">The enzyme was named after a masochistic character Tafazzi, once popular on Italian television, apparently due to the difficulty encountered for its identification and characterization.</text>
</comment>
<comment type="similarity">
    <text evidence="7">Belongs to the taffazin family.</text>
</comment>
<evidence type="ECO:0000250" key="1">
    <source>
        <dbReference type="UniProtKB" id="Q06510"/>
    </source>
</evidence>
<evidence type="ECO:0000250" key="2">
    <source>
        <dbReference type="UniProtKB" id="Q16635"/>
    </source>
</evidence>
<evidence type="ECO:0000250" key="3">
    <source>
        <dbReference type="UniProtKB" id="Q3TFD2"/>
    </source>
</evidence>
<evidence type="ECO:0000250" key="4">
    <source>
        <dbReference type="UniProtKB" id="Q91WF0"/>
    </source>
</evidence>
<evidence type="ECO:0000250" key="5">
    <source>
        <dbReference type="UniProtKB" id="Q9V6G5"/>
    </source>
</evidence>
<evidence type="ECO:0000255" key="6"/>
<evidence type="ECO:0000305" key="7"/>
<keyword id="KW-0012">Acyltransferase</keyword>
<keyword id="KW-0025">Alternative splicing</keyword>
<keyword id="KW-0443">Lipid metabolism</keyword>
<keyword id="KW-0472">Membrane</keyword>
<keyword id="KW-0496">Mitochondrion</keyword>
<keyword id="KW-0999">Mitochondrion inner membrane</keyword>
<keyword id="KW-1000">Mitochondrion outer membrane</keyword>
<keyword id="KW-0808">Transferase</keyword>
<feature type="chain" id="PRO_0000220931" description="Tafazzin">
    <location>
        <begin position="1"/>
        <end position="262"/>
    </location>
</feature>
<feature type="topological domain" description="Mitochondrial intermembrane" evidence="7">
    <location>
        <begin position="1"/>
        <end position="14"/>
    </location>
</feature>
<feature type="intramembrane region" evidence="6">
    <location>
        <begin position="15"/>
        <end position="35"/>
    </location>
</feature>
<feature type="topological domain" description="Mitochondrial intermembrane" evidence="7">
    <location>
        <begin position="36"/>
        <end position="262"/>
    </location>
</feature>
<feature type="region of interest" description="Mitochondrial targeting sequence" evidence="2">
    <location>
        <begin position="82"/>
        <end position="92"/>
    </location>
</feature>
<feature type="region of interest" description="Mitochondrial targeting sequence" evidence="2">
    <location>
        <begin position="155"/>
        <end position="190"/>
    </location>
</feature>
<feature type="short sequence motif" description="HXXXXD motif" evidence="3">
    <location>
        <begin position="69"/>
        <end position="74"/>
    </location>
</feature>
<feature type="splice variant" id="VSP_061373" description="In isoform 1.">
    <original>R</original>
    <variation>RGAEFFQPENEGKGVLDTGRHMPGAGKRREK</variation>
    <location>
        <position position="123"/>
    </location>
</feature>
<sequence>MPLHVKWPFPAVPPLTWTLASSVVMGLVGTYSCFWTKYMNHLTVHNKEVLYELIENRGPATPLITVSNHQSCMDDPHLWGILKLRHIWNLKLMRWTPAAADICFTKELHSHFFSLGKCVPVCRGDGVYQKGMDFILEKLNHGDWVHIFPEGKVNMSSEFLRFKWGIGRLIAECHLNPIILPLWHVGMNDVLPNSPPYFPRFGQKITVLIGKPFSALPVLERLRAENKSAVEMRKVLTDFIQEEFQRLKTQAEQLHNHLQPGR</sequence>
<proteinExistence type="inferred from homology"/>
<organism>
    <name type="scientific">Pongo pygmaeus</name>
    <name type="common">Bornean orangutan</name>
    <dbReference type="NCBI Taxonomy" id="9600"/>
    <lineage>
        <taxon>Eukaryota</taxon>
        <taxon>Metazoa</taxon>
        <taxon>Chordata</taxon>
        <taxon>Craniata</taxon>
        <taxon>Vertebrata</taxon>
        <taxon>Euteleostomi</taxon>
        <taxon>Mammalia</taxon>
        <taxon>Eutheria</taxon>
        <taxon>Euarchontoglires</taxon>
        <taxon>Primates</taxon>
        <taxon>Haplorrhini</taxon>
        <taxon>Catarrhini</taxon>
        <taxon>Hominidae</taxon>
        <taxon>Pongo</taxon>
    </lineage>
</organism>
<accession>Q6IV82</accession>
<gene>
    <name type="primary">TAFAZZIN</name>
    <name type="synonym">TAZ</name>
</gene>
<name>TAZ_PONPY</name>
<dbReference type="EC" id="2.3.1.-" evidence="2"/>
<dbReference type="EMBL" id="AY621046">
    <property type="protein sequence ID" value="AAT45906.1"/>
    <property type="molecule type" value="Genomic_DNA"/>
</dbReference>
<dbReference type="EMBL" id="AY621044">
    <property type="protein sequence ID" value="AAT45906.1"/>
    <property type="status" value="JOINED"/>
    <property type="molecule type" value="Genomic_DNA"/>
</dbReference>
<dbReference type="EMBL" id="AY621045">
    <property type="protein sequence ID" value="AAT45906.1"/>
    <property type="status" value="JOINED"/>
    <property type="molecule type" value="Genomic_DNA"/>
</dbReference>
<dbReference type="RefSeq" id="XP_054326833.1">
    <molecule id="Q6IV82-1"/>
    <property type="nucleotide sequence ID" value="XM_054470858.2"/>
</dbReference>
<dbReference type="RefSeq" id="XP_054326835.1">
    <molecule id="Q6IV82-2"/>
    <property type="nucleotide sequence ID" value="XM_054470860.2"/>
</dbReference>
<dbReference type="SMR" id="Q6IV82"/>
<dbReference type="GeneID" id="129023939"/>
<dbReference type="GO" id="GO:0005743">
    <property type="term" value="C:mitochondrial inner membrane"/>
    <property type="evidence" value="ECO:0007669"/>
    <property type="project" value="UniProtKB-SubCell"/>
</dbReference>
<dbReference type="GO" id="GO:0005741">
    <property type="term" value="C:mitochondrial outer membrane"/>
    <property type="evidence" value="ECO:0007669"/>
    <property type="project" value="UniProtKB-SubCell"/>
</dbReference>
<dbReference type="GO" id="GO:0005739">
    <property type="term" value="C:mitochondrion"/>
    <property type="evidence" value="ECO:0000250"/>
    <property type="project" value="UniProtKB"/>
</dbReference>
<dbReference type="GO" id="GO:0047184">
    <property type="term" value="F:1-acylglycerophosphocholine O-acyltransferase activity"/>
    <property type="evidence" value="ECO:0007669"/>
    <property type="project" value="TreeGrafter"/>
</dbReference>
<dbReference type="GO" id="GO:0035965">
    <property type="term" value="P:cardiolipin acyl-chain remodeling"/>
    <property type="evidence" value="ECO:0000250"/>
    <property type="project" value="UniProtKB"/>
</dbReference>
<dbReference type="GO" id="GO:0032048">
    <property type="term" value="P:cardiolipin metabolic process"/>
    <property type="evidence" value="ECO:0000250"/>
    <property type="project" value="UniProtKB"/>
</dbReference>
<dbReference type="GO" id="GO:0007007">
    <property type="term" value="P:inner mitochondrial membrane organization"/>
    <property type="evidence" value="ECO:0007669"/>
    <property type="project" value="TreeGrafter"/>
</dbReference>
<dbReference type="CDD" id="cd07989">
    <property type="entry name" value="LPLAT_AGPAT-like"/>
    <property type="match status" value="1"/>
</dbReference>
<dbReference type="InterPro" id="IPR002123">
    <property type="entry name" value="Plipid/glycerol_acylTrfase"/>
</dbReference>
<dbReference type="InterPro" id="IPR000872">
    <property type="entry name" value="Tafazzin"/>
</dbReference>
<dbReference type="PANTHER" id="PTHR12497:SF0">
    <property type="entry name" value="TAFAZZIN"/>
    <property type="match status" value="1"/>
</dbReference>
<dbReference type="PANTHER" id="PTHR12497">
    <property type="entry name" value="TAZ PROTEIN TAFAZZIN"/>
    <property type="match status" value="1"/>
</dbReference>
<dbReference type="Pfam" id="PF01553">
    <property type="entry name" value="Acyltransferase"/>
    <property type="match status" value="1"/>
</dbReference>
<dbReference type="PRINTS" id="PR00979">
    <property type="entry name" value="TAFAZZIN"/>
</dbReference>
<dbReference type="SMART" id="SM00563">
    <property type="entry name" value="PlsC"/>
    <property type="match status" value="1"/>
</dbReference>
<dbReference type="SUPFAM" id="SSF69593">
    <property type="entry name" value="Glycerol-3-phosphate (1)-acyltransferase"/>
    <property type="match status" value="1"/>
</dbReference>
<reference key="1">
    <citation type="journal article" date="2005" name="Am. J. Med. Genet. A">
        <title>Barth syndrome: TAZ gene mutations, mRNAs, and evolution.</title>
        <authorList>
            <person name="Gonzalez I.L."/>
        </authorList>
    </citation>
    <scope>NUCLEOTIDE SEQUENCE [GENOMIC DNA]</scope>
</reference>
<protein>
    <recommendedName>
        <fullName>Tafazzin</fullName>
        <shortName>Taz</shortName>
        <ecNumber evidence="2">2.3.1.-</ecNumber>
    </recommendedName>
</protein>